<accession>Q49WP1</accession>
<dbReference type="EC" id="2.5.1.141" evidence="1"/>
<dbReference type="EMBL" id="AP008934">
    <property type="protein sequence ID" value="BAE18818.1"/>
    <property type="molecule type" value="Genomic_DNA"/>
</dbReference>
<dbReference type="SMR" id="Q49WP1"/>
<dbReference type="KEGG" id="ssp:SSP1673"/>
<dbReference type="eggNOG" id="COG0109">
    <property type="taxonomic scope" value="Bacteria"/>
</dbReference>
<dbReference type="HOGENOM" id="CLU_029631_0_0_9"/>
<dbReference type="OrthoDB" id="9814417at2"/>
<dbReference type="UniPathway" id="UPA00834">
    <property type="reaction ID" value="UER00712"/>
</dbReference>
<dbReference type="Proteomes" id="UP000006371">
    <property type="component" value="Chromosome"/>
</dbReference>
<dbReference type="GO" id="GO:0005886">
    <property type="term" value="C:plasma membrane"/>
    <property type="evidence" value="ECO:0007669"/>
    <property type="project" value="UniProtKB-SubCell"/>
</dbReference>
<dbReference type="GO" id="GO:0008495">
    <property type="term" value="F:protoheme IX farnesyltransferase activity"/>
    <property type="evidence" value="ECO:0007669"/>
    <property type="project" value="UniProtKB-UniRule"/>
</dbReference>
<dbReference type="GO" id="GO:0048034">
    <property type="term" value="P:heme O biosynthetic process"/>
    <property type="evidence" value="ECO:0007669"/>
    <property type="project" value="UniProtKB-UniRule"/>
</dbReference>
<dbReference type="CDD" id="cd13957">
    <property type="entry name" value="PT_UbiA_Cox10"/>
    <property type="match status" value="1"/>
</dbReference>
<dbReference type="Gene3D" id="1.10.357.140">
    <property type="entry name" value="UbiA prenyltransferase"/>
    <property type="match status" value="1"/>
</dbReference>
<dbReference type="HAMAP" id="MF_00154">
    <property type="entry name" value="CyoE_CtaB"/>
    <property type="match status" value="1"/>
</dbReference>
<dbReference type="InterPro" id="IPR006369">
    <property type="entry name" value="Protohaem_IX_farnesylTrfase"/>
</dbReference>
<dbReference type="InterPro" id="IPR000537">
    <property type="entry name" value="UbiA_prenyltransferase"/>
</dbReference>
<dbReference type="InterPro" id="IPR044878">
    <property type="entry name" value="UbiA_sf"/>
</dbReference>
<dbReference type="NCBIfam" id="TIGR01473">
    <property type="entry name" value="cyoE_ctaB"/>
    <property type="match status" value="1"/>
</dbReference>
<dbReference type="PANTHER" id="PTHR43448">
    <property type="entry name" value="PROTOHEME IX FARNESYLTRANSFERASE, MITOCHONDRIAL"/>
    <property type="match status" value="1"/>
</dbReference>
<dbReference type="PANTHER" id="PTHR43448:SF2">
    <property type="entry name" value="PROTOHEME IX FARNESYLTRANSFERASE, MITOCHONDRIAL"/>
    <property type="match status" value="1"/>
</dbReference>
<dbReference type="Pfam" id="PF01040">
    <property type="entry name" value="UbiA"/>
    <property type="match status" value="1"/>
</dbReference>
<proteinExistence type="inferred from homology"/>
<protein>
    <recommendedName>
        <fullName evidence="1">Protoheme IX farnesyltransferase</fullName>
        <ecNumber evidence="1">2.5.1.141</ecNumber>
    </recommendedName>
    <alternativeName>
        <fullName evidence="1">Heme B farnesyltransferase</fullName>
    </alternativeName>
    <alternativeName>
        <fullName evidence="1">Heme O synthase</fullName>
    </alternativeName>
</protein>
<name>COXX_STAS1</name>
<keyword id="KW-1003">Cell membrane</keyword>
<keyword id="KW-0350">Heme biosynthesis</keyword>
<keyword id="KW-0472">Membrane</keyword>
<keyword id="KW-1185">Reference proteome</keyword>
<keyword id="KW-0808">Transferase</keyword>
<keyword id="KW-0812">Transmembrane</keyword>
<keyword id="KW-1133">Transmembrane helix</keyword>
<feature type="chain" id="PRO_0000327167" description="Protoheme IX farnesyltransferase">
    <location>
        <begin position="1"/>
        <end position="303"/>
    </location>
</feature>
<feature type="transmembrane region" description="Helical" evidence="1">
    <location>
        <begin position="25"/>
        <end position="45"/>
    </location>
</feature>
<feature type="transmembrane region" description="Helical" evidence="1">
    <location>
        <begin position="54"/>
        <end position="74"/>
    </location>
</feature>
<feature type="transmembrane region" description="Helical" evidence="1">
    <location>
        <begin position="118"/>
        <end position="138"/>
    </location>
</feature>
<feature type="transmembrane region" description="Helical" evidence="1">
    <location>
        <begin position="151"/>
        <end position="171"/>
    </location>
</feature>
<feature type="transmembrane region" description="Helical" evidence="1">
    <location>
        <begin position="177"/>
        <end position="197"/>
    </location>
</feature>
<feature type="transmembrane region" description="Helical" evidence="1">
    <location>
        <begin position="230"/>
        <end position="250"/>
    </location>
</feature>
<feature type="transmembrane region" description="Helical" evidence="1">
    <location>
        <begin position="280"/>
        <end position="300"/>
    </location>
</feature>
<organism>
    <name type="scientific">Staphylococcus saprophyticus subsp. saprophyticus (strain ATCC 15305 / DSM 20229 / NCIMB 8711 / NCTC 7292 / S-41)</name>
    <dbReference type="NCBI Taxonomy" id="342451"/>
    <lineage>
        <taxon>Bacteria</taxon>
        <taxon>Bacillati</taxon>
        <taxon>Bacillota</taxon>
        <taxon>Bacilli</taxon>
        <taxon>Bacillales</taxon>
        <taxon>Staphylococcaceae</taxon>
        <taxon>Staphylococcus</taxon>
    </lineage>
</organism>
<comment type="function">
    <text evidence="1">Converts heme B (protoheme IX) to heme O by substitution of the vinyl group on carbon 2 of heme B porphyrin ring with a hydroxyethyl farnesyl side group.</text>
</comment>
<comment type="catalytic activity">
    <reaction evidence="1">
        <text>heme b + (2E,6E)-farnesyl diphosphate + H2O = Fe(II)-heme o + diphosphate</text>
        <dbReference type="Rhea" id="RHEA:28070"/>
        <dbReference type="ChEBI" id="CHEBI:15377"/>
        <dbReference type="ChEBI" id="CHEBI:33019"/>
        <dbReference type="ChEBI" id="CHEBI:60344"/>
        <dbReference type="ChEBI" id="CHEBI:60530"/>
        <dbReference type="ChEBI" id="CHEBI:175763"/>
        <dbReference type="EC" id="2.5.1.141"/>
    </reaction>
</comment>
<comment type="pathway">
    <text evidence="1">Porphyrin-containing compound metabolism; heme O biosynthesis; heme O from protoheme: step 1/1.</text>
</comment>
<comment type="subunit">
    <text evidence="1">Interacts with CtaA.</text>
</comment>
<comment type="subcellular location">
    <subcellularLocation>
        <location evidence="1">Cell membrane</location>
        <topology evidence="1">Multi-pass membrane protein</topology>
    </subcellularLocation>
</comment>
<comment type="miscellaneous">
    <text evidence="1">Carbon 2 of the heme B porphyrin ring is defined according to the Fischer nomenclature.</text>
</comment>
<comment type="similarity">
    <text evidence="1">Belongs to the UbiA prenyltransferase family. Protoheme IX farnesyltransferase subfamily.</text>
</comment>
<evidence type="ECO:0000255" key="1">
    <source>
        <dbReference type="HAMAP-Rule" id="MF_00154"/>
    </source>
</evidence>
<sequence>MNKEQTLAHNSSRVTFKELQQIIKMGLVQGNLIPAFAGSWLAIVLANHSFLSSIPQILMMLVGSTLIMGGACALNNYYDQDIDSIMPSKQQRPTVNERISNRNLLILSFGMMLIGEALLFALNIPSGVIGLLGIVGYVSFYSIWSKRHTVWNTVIGSFPGAVPPLIGWTAIEGNISLVAVALFLVIFCWQPIHFYALAIKRKDEYSLANIPMLPSVKGFNRTRVSMFFWLVVLLPLPFLLSSLGVTFIVLATLLNLGWLYLGLTSFKKDTDQTKWATKMFIYSLNYLVVFFVLVVVISLIQMF</sequence>
<reference key="1">
    <citation type="journal article" date="2005" name="Proc. Natl. Acad. Sci. U.S.A.">
        <title>Whole genome sequence of Staphylococcus saprophyticus reveals the pathogenesis of uncomplicated urinary tract infection.</title>
        <authorList>
            <person name="Kuroda M."/>
            <person name="Yamashita A."/>
            <person name="Hirakawa H."/>
            <person name="Kumano M."/>
            <person name="Morikawa K."/>
            <person name="Higashide M."/>
            <person name="Maruyama A."/>
            <person name="Inose Y."/>
            <person name="Matoba K."/>
            <person name="Toh H."/>
            <person name="Kuhara S."/>
            <person name="Hattori M."/>
            <person name="Ohta T."/>
        </authorList>
    </citation>
    <scope>NUCLEOTIDE SEQUENCE [LARGE SCALE GENOMIC DNA]</scope>
    <source>
        <strain>ATCC 15305 / DSM 20229 / NCIMB 8711 / NCTC 7292 / S-41</strain>
    </source>
</reference>
<gene>
    <name evidence="1" type="primary">ctaB</name>
    <name type="ordered locus">SSP1673</name>
</gene>